<organism>
    <name type="scientific">Arabidopsis thaliana</name>
    <name type="common">Mouse-ear cress</name>
    <dbReference type="NCBI Taxonomy" id="3702"/>
    <lineage>
        <taxon>Eukaryota</taxon>
        <taxon>Viridiplantae</taxon>
        <taxon>Streptophyta</taxon>
        <taxon>Embryophyta</taxon>
        <taxon>Tracheophyta</taxon>
        <taxon>Spermatophyta</taxon>
        <taxon>Magnoliopsida</taxon>
        <taxon>eudicotyledons</taxon>
        <taxon>Gunneridae</taxon>
        <taxon>Pentapetalae</taxon>
        <taxon>rosids</taxon>
        <taxon>malvids</taxon>
        <taxon>Brassicales</taxon>
        <taxon>Brassicaceae</taxon>
        <taxon>Camelineae</taxon>
        <taxon>Arabidopsis</taxon>
    </lineage>
</organism>
<proteinExistence type="evidence at transcript level"/>
<name>PP407_ARATH</name>
<reference key="1">
    <citation type="journal article" date="1998" name="DNA Res.">
        <title>Structural analysis of Arabidopsis thaliana chromosome 5. VII. Sequence features of the regions of 1,013,767 bp covered by sixteen physically assigned P1 and TAC clones.</title>
        <authorList>
            <person name="Nakamura Y."/>
            <person name="Sato S."/>
            <person name="Asamizu E."/>
            <person name="Kaneko T."/>
            <person name="Kotani H."/>
            <person name="Miyajima N."/>
            <person name="Tabata S."/>
        </authorList>
    </citation>
    <scope>NUCLEOTIDE SEQUENCE [LARGE SCALE GENOMIC DNA]</scope>
    <source>
        <strain>cv. Columbia</strain>
    </source>
</reference>
<reference key="2">
    <citation type="journal article" date="1998" name="DNA Res.">
        <title>Structural analysis of Arabidopsis thaliana chromosome 5. VI. Sequence features of the regions of 1,367,185 bp covered by 19 physically assigned P1 and TAC clones.</title>
        <authorList>
            <person name="Kotani H."/>
            <person name="Nakamura Y."/>
            <person name="Sato S."/>
            <person name="Asamizu E."/>
            <person name="Kaneko T."/>
            <person name="Miyajima N."/>
            <person name="Tabata S."/>
        </authorList>
    </citation>
    <scope>NUCLEOTIDE SEQUENCE [LARGE SCALE GENOMIC DNA]</scope>
    <source>
        <strain>cv. Columbia</strain>
    </source>
</reference>
<reference key="3">
    <citation type="journal article" date="2017" name="Plant J.">
        <title>Araport11: a complete reannotation of the Arabidopsis thaliana reference genome.</title>
        <authorList>
            <person name="Cheng C.Y."/>
            <person name="Krishnakumar V."/>
            <person name="Chan A.P."/>
            <person name="Thibaud-Nissen F."/>
            <person name="Schobel S."/>
            <person name="Town C.D."/>
        </authorList>
    </citation>
    <scope>GENOME REANNOTATION</scope>
    <source>
        <strain>cv. Columbia</strain>
    </source>
</reference>
<reference key="4">
    <citation type="journal article" date="2004" name="Plant Cell">
        <title>Genome-wide analysis of Arabidopsis pentatricopeptide repeat proteins reveals their essential role in organelle biogenesis.</title>
        <authorList>
            <person name="Lurin C."/>
            <person name="Andres C."/>
            <person name="Aubourg S."/>
            <person name="Bellaoui M."/>
            <person name="Bitton F."/>
            <person name="Bruyere C."/>
            <person name="Caboche M."/>
            <person name="Debast C."/>
            <person name="Gualberto J."/>
            <person name="Hoffmann B."/>
            <person name="Lecharny A."/>
            <person name="Le Ret M."/>
            <person name="Martin-Magniette M.-L."/>
            <person name="Mireau H."/>
            <person name="Peeters N."/>
            <person name="Renou J.-P."/>
            <person name="Szurek B."/>
            <person name="Taconnat L."/>
            <person name="Small I."/>
        </authorList>
    </citation>
    <scope>GENE FAMILY</scope>
</reference>
<sequence>MFLTKTLIRRSLSTFASSPSDSLLADKALTFLKRHPYQLHHLSANFTPEAASNLLLKSQNDQALILKFLNWANPHQFFTLRCKCITLHILTKFKLYKTAQILAEDVAAKTLDDEYASLVFKSLQETYDLCYSTSSVFDLVVKSYSRLSLIDKALSIVHLAQAHGFMPGVLSYNAVLDATIRSKRNISFAENVFKEMLESQVSPNVFTYNILIRGFCFAGNIDVALTLFDKMETKGCLPNVVTYNTLIDGYCKLRKIDDGFKLLRSMALKGLEPNLISYNVVINGLCREGRMKEVSFVLTEMNRRGYSLDEVTYNTLIKGYCKEGNFHQALVMHAEMLRHGLTPSVITYTSLIHSMCKAGNMNRAMEFLDQMRVRGLCPNERTYTTLVDGFSQKGYMNEAYRVLREMNDNGFSPSVVTYNALINGHCVTGKMEDAIAVLEDMKEKGLSPDVVSYSTVLSGFCRSYDVDEALRVKREMVEKGIKPDTITYSSLIQGFCEQRRTKEACDLYEEMLRVGLPPDEFTYTALINAYCMEGDLEKALQLHNEMVEKGVLPDVVTYSVLINGLNKQSRTREAKRLLLKLFYEESVPSDVTYHTLIENCSNIEFKSVVSLIKGFCMKGMMTEADQVFESMLGKNHKPDGTAYNIMIHGHCRAGDIRKAYTLYKEMVKSGFLLHTVTVIALVKALHKEGKVNELNSVIVHVLRSCELSEAEQAKVLVEINHREGNMDVVLDVLAEMAKDGFLPNGIS</sequence>
<gene>
    <name type="primary">EMB2745</name>
    <name type="ordered locus">At5g39710</name>
    <name type="ORF">MIJ24.190</name>
</gene>
<protein>
    <recommendedName>
        <fullName>Pentatricopeptide repeat-containing protein At5g39710</fullName>
    </recommendedName>
    <alternativeName>
        <fullName>Protein EMBRYO DEFECTIVE 2745</fullName>
    </alternativeName>
</protein>
<feature type="chain" id="PRO_0000363544" description="Pentatricopeptide repeat-containing protein At5g39710">
    <location>
        <begin position="1"/>
        <end position="747"/>
    </location>
</feature>
<feature type="repeat" description="PPR 1">
    <location>
        <begin position="133"/>
        <end position="167"/>
    </location>
</feature>
<feature type="repeat" description="PPR 2">
    <location>
        <begin position="168"/>
        <end position="203"/>
    </location>
</feature>
<feature type="repeat" description="PPR 3">
    <location>
        <begin position="204"/>
        <end position="238"/>
    </location>
</feature>
<feature type="repeat" description="PPR 4">
    <location>
        <begin position="239"/>
        <end position="273"/>
    </location>
</feature>
<feature type="repeat" description="PPR 5">
    <location>
        <begin position="274"/>
        <end position="308"/>
    </location>
</feature>
<feature type="repeat" description="PPR 6">
    <location>
        <begin position="309"/>
        <end position="343"/>
    </location>
</feature>
<feature type="repeat" description="PPR 7">
    <location>
        <begin position="344"/>
        <end position="378"/>
    </location>
</feature>
<feature type="repeat" description="PPR 8">
    <location>
        <begin position="379"/>
        <end position="413"/>
    </location>
</feature>
<feature type="repeat" description="PPR 9">
    <location>
        <begin position="414"/>
        <end position="448"/>
    </location>
</feature>
<feature type="repeat" description="PPR 10">
    <location>
        <begin position="449"/>
        <end position="483"/>
    </location>
</feature>
<feature type="repeat" description="PPR 11">
    <location>
        <begin position="484"/>
        <end position="518"/>
    </location>
</feature>
<feature type="repeat" description="PPR 12">
    <location>
        <begin position="519"/>
        <end position="553"/>
    </location>
</feature>
<feature type="repeat" description="PPR 13">
    <location>
        <begin position="554"/>
        <end position="588"/>
    </location>
</feature>
<feature type="repeat" description="PPR 14">
    <location>
        <begin position="604"/>
        <end position="638"/>
    </location>
</feature>
<feature type="repeat" description="PPR 15">
    <location>
        <begin position="639"/>
        <end position="673"/>
    </location>
</feature>
<evidence type="ECO:0000305" key="1"/>
<accession>Q9FIX3</accession>
<comment type="similarity">
    <text evidence="1">Belongs to the PPR family. P subfamily.</text>
</comment>
<comment type="online information" name="Pentatricopeptide repeat proteins">
    <link uri="https://ppr.plantenergy.uwa.edu.au"/>
</comment>
<keyword id="KW-1185">Reference proteome</keyword>
<keyword id="KW-0677">Repeat</keyword>
<dbReference type="EMBL" id="AB016876">
    <property type="protein sequence ID" value="BAB11377.1"/>
    <property type="molecule type" value="Genomic_DNA"/>
</dbReference>
<dbReference type="EMBL" id="AB012243">
    <property type="protein sequence ID" value="BAB11377.1"/>
    <property type="status" value="JOINED"/>
    <property type="molecule type" value="Genomic_DNA"/>
</dbReference>
<dbReference type="EMBL" id="CP002688">
    <property type="protein sequence ID" value="AED94466.1"/>
    <property type="molecule type" value="Genomic_DNA"/>
</dbReference>
<dbReference type="RefSeq" id="NP_198787.1">
    <property type="nucleotide sequence ID" value="NM_123333.2"/>
</dbReference>
<dbReference type="SMR" id="Q9FIX3"/>
<dbReference type="FunCoup" id="Q9FIX3">
    <property type="interactions" value="293"/>
</dbReference>
<dbReference type="STRING" id="3702.Q9FIX3"/>
<dbReference type="iPTMnet" id="Q9FIX3"/>
<dbReference type="PaxDb" id="3702-AT5G39710.1"/>
<dbReference type="ProteomicsDB" id="249288"/>
<dbReference type="EnsemblPlants" id="AT5G39710.1">
    <property type="protein sequence ID" value="AT5G39710.1"/>
    <property type="gene ID" value="AT5G39710"/>
</dbReference>
<dbReference type="GeneID" id="833967"/>
<dbReference type="Gramene" id="AT5G39710.1">
    <property type="protein sequence ID" value="AT5G39710.1"/>
    <property type="gene ID" value="AT5G39710"/>
</dbReference>
<dbReference type="KEGG" id="ath:AT5G39710"/>
<dbReference type="Araport" id="AT5G39710"/>
<dbReference type="TAIR" id="AT5G39710">
    <property type="gene designation" value="EMB2745"/>
</dbReference>
<dbReference type="eggNOG" id="KOG4197">
    <property type="taxonomic scope" value="Eukaryota"/>
</dbReference>
<dbReference type="HOGENOM" id="CLU_002706_49_12_1"/>
<dbReference type="InParanoid" id="Q9FIX3"/>
<dbReference type="OMA" id="LKRHPYQ"/>
<dbReference type="PhylomeDB" id="Q9FIX3"/>
<dbReference type="PRO" id="PR:Q9FIX3"/>
<dbReference type="Proteomes" id="UP000006548">
    <property type="component" value="Chromosome 5"/>
</dbReference>
<dbReference type="ExpressionAtlas" id="Q9FIX3">
    <property type="expression patterns" value="baseline and differential"/>
</dbReference>
<dbReference type="GO" id="GO:0005739">
    <property type="term" value="C:mitochondrion"/>
    <property type="evidence" value="ECO:0007005"/>
    <property type="project" value="TAIR"/>
</dbReference>
<dbReference type="FunFam" id="1.25.40.10:FF:000558">
    <property type="entry name" value="Pentatricopeptide repeat-containing protein At5g39710"/>
    <property type="match status" value="2"/>
</dbReference>
<dbReference type="FunFam" id="1.25.40.10:FF:000579">
    <property type="entry name" value="Pentatricopeptide repeat-containing protein At5g39710"/>
    <property type="match status" value="1"/>
</dbReference>
<dbReference type="Gene3D" id="1.25.40.10">
    <property type="entry name" value="Tetratricopeptide repeat domain"/>
    <property type="match status" value="5"/>
</dbReference>
<dbReference type="InterPro" id="IPR002885">
    <property type="entry name" value="Pentatricopeptide_rpt"/>
</dbReference>
<dbReference type="InterPro" id="IPR011990">
    <property type="entry name" value="TPR-like_helical_dom_sf"/>
</dbReference>
<dbReference type="NCBIfam" id="TIGR00756">
    <property type="entry name" value="PPR"/>
    <property type="match status" value="12"/>
</dbReference>
<dbReference type="PANTHER" id="PTHR47941">
    <property type="entry name" value="PENTATRICOPEPTIDE REPEAT-CONTAINING PROTEIN 3, MITOCHONDRIAL"/>
    <property type="match status" value="1"/>
</dbReference>
<dbReference type="Pfam" id="PF12854">
    <property type="entry name" value="PPR_1"/>
    <property type="match status" value="3"/>
</dbReference>
<dbReference type="Pfam" id="PF13041">
    <property type="entry name" value="PPR_2"/>
    <property type="match status" value="5"/>
</dbReference>
<dbReference type="SUPFAM" id="SSF81901">
    <property type="entry name" value="HCP-like"/>
    <property type="match status" value="1"/>
</dbReference>
<dbReference type="PROSITE" id="PS51375">
    <property type="entry name" value="PPR"/>
    <property type="match status" value="16"/>
</dbReference>